<accession>A6W0S5</accession>
<keyword id="KW-0963">Cytoplasm</keyword>
<keyword id="KW-0274">FAD</keyword>
<keyword id="KW-0285">Flavoprotein</keyword>
<keyword id="KW-0489">Methyltransferase</keyword>
<keyword id="KW-0511">Multifunctional enzyme</keyword>
<keyword id="KW-0560">Oxidoreductase</keyword>
<keyword id="KW-0949">S-adenosyl-L-methionine</keyword>
<keyword id="KW-0808">Transferase</keyword>
<keyword id="KW-0819">tRNA processing</keyword>
<name>MNMC_MARMS</name>
<feature type="chain" id="PRO_0000348002" description="tRNA 5-methylaminomethyl-2-thiouridine biosynthesis bifunctional protein MnmC">
    <location>
        <begin position="1"/>
        <end position="674"/>
    </location>
</feature>
<feature type="region of interest" description="tRNA (mnm(5)s(2)U34)-methyltransferase">
    <location>
        <begin position="1"/>
        <end position="237"/>
    </location>
</feature>
<feature type="region of interest" description="FAD-dependent cmnm(5)s(2)U34 oxidoreductase">
    <location>
        <begin position="270"/>
        <end position="674"/>
    </location>
</feature>
<proteinExistence type="inferred from homology"/>
<gene>
    <name evidence="1" type="primary">mnmC</name>
    <name type="ordered locus">Mmwyl1_3401</name>
</gene>
<organism>
    <name type="scientific">Marinomonas sp. (strain MWYL1)</name>
    <dbReference type="NCBI Taxonomy" id="400668"/>
    <lineage>
        <taxon>Bacteria</taxon>
        <taxon>Pseudomonadati</taxon>
        <taxon>Pseudomonadota</taxon>
        <taxon>Gammaproteobacteria</taxon>
        <taxon>Oceanospirillales</taxon>
        <taxon>Oceanospirillaceae</taxon>
        <taxon>Marinomonas</taxon>
    </lineage>
</organism>
<sequence>MLTSYQLESPALSWGEDGAPHSNQFDDVYFDKESGLEETRHVFLKNNQLSGRWASLQKNAFVIAETGFGTGLNFLCAWQAFLTEAASDKQLHFISVEKYPMTKSMLTDALKMWPSISHLSQQLIDAYPEVCHGLHRIELEQGRIQLTLWFGEAEDGFAALDADVDAWFLDGFAPSKNPEMWSDNLFKHIHRLSHQGTTFSTFTAAGIVRRGLKNVGFDVRKVKGFGQKREMTVGELNSSTAPLSARMSQGQAWFNLRQDKTSEITKVLVVGAGLAGANTAYALAKQGIKVEVWEQGNCIAGGASGNPQGMLYPKLASQDTPVNRFYLSAYLHATRLYSSLDRHKQFWDACGLIQIPKNDKEAVRFQKLLDEKLYPEAILQASKDREGCLFLPLSGWVVLTQLCETLLSHENIHVCLNTKLESLSPIELDDKTFGWQARSKYQQAPLNDRQACFSHVVLCTANDTKALGVTPKTPDYPIRGQVSFMDIEKAKAACQTIGESADKIDFDKILCEFGYVSPSINGLLHFGSTYDLKDLDDRVREEGHKRNLAILESLLLLPKETFNSEDCGGRVSFRCAVPDYTPIVGPVQSEDVYQQAYSTLTKNAKWQSNEIAEPIKQLYINIGHGSRGLISTPLSGSYIASLITGTPSPLEQKVSHKLHPSRFIIRDLKRSQIL</sequence>
<evidence type="ECO:0000255" key="1">
    <source>
        <dbReference type="HAMAP-Rule" id="MF_01102"/>
    </source>
</evidence>
<dbReference type="EC" id="2.1.1.61" evidence="1"/>
<dbReference type="EC" id="1.5.-.-" evidence="1"/>
<dbReference type="EMBL" id="CP000749">
    <property type="protein sequence ID" value="ABR72304.1"/>
    <property type="molecule type" value="Genomic_DNA"/>
</dbReference>
<dbReference type="SMR" id="A6W0S5"/>
<dbReference type="STRING" id="400668.Mmwyl1_3401"/>
<dbReference type="KEGG" id="mmw:Mmwyl1_3401"/>
<dbReference type="eggNOG" id="COG0665">
    <property type="taxonomic scope" value="Bacteria"/>
</dbReference>
<dbReference type="eggNOG" id="COG4121">
    <property type="taxonomic scope" value="Bacteria"/>
</dbReference>
<dbReference type="HOGENOM" id="CLU_022427_1_0_6"/>
<dbReference type="OrthoDB" id="9786494at2"/>
<dbReference type="GO" id="GO:0005737">
    <property type="term" value="C:cytoplasm"/>
    <property type="evidence" value="ECO:0007669"/>
    <property type="project" value="UniProtKB-SubCell"/>
</dbReference>
<dbReference type="GO" id="GO:0050660">
    <property type="term" value="F:flavin adenine dinucleotide binding"/>
    <property type="evidence" value="ECO:0007669"/>
    <property type="project" value="UniProtKB-UniRule"/>
</dbReference>
<dbReference type="GO" id="GO:0016645">
    <property type="term" value="F:oxidoreductase activity, acting on the CH-NH group of donors"/>
    <property type="evidence" value="ECO:0007669"/>
    <property type="project" value="InterPro"/>
</dbReference>
<dbReference type="GO" id="GO:0004808">
    <property type="term" value="F:tRNA (5-methylaminomethyl-2-thiouridylate)(34)-methyltransferase activity"/>
    <property type="evidence" value="ECO:0007669"/>
    <property type="project" value="UniProtKB-EC"/>
</dbReference>
<dbReference type="GO" id="GO:0032259">
    <property type="term" value="P:methylation"/>
    <property type="evidence" value="ECO:0007669"/>
    <property type="project" value="UniProtKB-KW"/>
</dbReference>
<dbReference type="GO" id="GO:0002097">
    <property type="term" value="P:tRNA wobble base modification"/>
    <property type="evidence" value="ECO:0007669"/>
    <property type="project" value="UniProtKB-UniRule"/>
</dbReference>
<dbReference type="Gene3D" id="3.30.9.10">
    <property type="entry name" value="D-Amino Acid Oxidase, subunit A, domain 2"/>
    <property type="match status" value="1"/>
</dbReference>
<dbReference type="Gene3D" id="3.50.50.60">
    <property type="entry name" value="FAD/NAD(P)-binding domain"/>
    <property type="match status" value="1"/>
</dbReference>
<dbReference type="Gene3D" id="3.40.50.150">
    <property type="entry name" value="Vaccinia Virus protein VP39"/>
    <property type="match status" value="1"/>
</dbReference>
<dbReference type="HAMAP" id="MF_01102">
    <property type="entry name" value="MnmC"/>
    <property type="match status" value="1"/>
</dbReference>
<dbReference type="InterPro" id="IPR006076">
    <property type="entry name" value="FAD-dep_OxRdtase"/>
</dbReference>
<dbReference type="InterPro" id="IPR036188">
    <property type="entry name" value="FAD/NAD-bd_sf"/>
</dbReference>
<dbReference type="InterPro" id="IPR008471">
    <property type="entry name" value="MnmC-like_methylTransf"/>
</dbReference>
<dbReference type="InterPro" id="IPR029063">
    <property type="entry name" value="SAM-dependent_MTases_sf"/>
</dbReference>
<dbReference type="InterPro" id="IPR023032">
    <property type="entry name" value="tRNA_MAMT_biosynth_bifunc_MnmC"/>
</dbReference>
<dbReference type="InterPro" id="IPR047785">
    <property type="entry name" value="tRNA_MNMC2"/>
</dbReference>
<dbReference type="InterPro" id="IPR017610">
    <property type="entry name" value="tRNA_S-uridine_synth_MnmC_C"/>
</dbReference>
<dbReference type="NCBIfam" id="TIGR03197">
    <property type="entry name" value="MnmC_Cterm"/>
    <property type="match status" value="1"/>
</dbReference>
<dbReference type="NCBIfam" id="NF002481">
    <property type="entry name" value="PRK01747.1-2"/>
    <property type="match status" value="1"/>
</dbReference>
<dbReference type="NCBIfam" id="NF033855">
    <property type="entry name" value="tRNA_MNMC2"/>
    <property type="match status" value="1"/>
</dbReference>
<dbReference type="PANTHER" id="PTHR13847">
    <property type="entry name" value="SARCOSINE DEHYDROGENASE-RELATED"/>
    <property type="match status" value="1"/>
</dbReference>
<dbReference type="PANTHER" id="PTHR13847:SF283">
    <property type="entry name" value="TRNA 5-METHYLAMINOMETHYL-2-THIOURIDINE BIOSYNTHESIS BIFUNCTIONAL PROTEIN MNMC"/>
    <property type="match status" value="1"/>
</dbReference>
<dbReference type="Pfam" id="PF01266">
    <property type="entry name" value="DAO"/>
    <property type="match status" value="1"/>
</dbReference>
<dbReference type="Pfam" id="PF05430">
    <property type="entry name" value="Methyltransf_30"/>
    <property type="match status" value="1"/>
</dbReference>
<dbReference type="SUPFAM" id="SSF51905">
    <property type="entry name" value="FAD/NAD(P)-binding domain"/>
    <property type="match status" value="1"/>
</dbReference>
<protein>
    <recommendedName>
        <fullName evidence="1">tRNA 5-methylaminomethyl-2-thiouridine biosynthesis bifunctional protein MnmC</fullName>
        <shortName evidence="1">tRNA mnm(5)s(2)U biosynthesis bifunctional protein</shortName>
    </recommendedName>
    <domain>
        <recommendedName>
            <fullName evidence="1">tRNA (mnm(5)s(2)U34)-methyltransferase</fullName>
            <ecNumber evidence="1">2.1.1.61</ecNumber>
        </recommendedName>
    </domain>
    <domain>
        <recommendedName>
            <fullName evidence="1">FAD-dependent cmnm(5)s(2)U34 oxidoreductase</fullName>
            <ecNumber evidence="1">1.5.-.-</ecNumber>
        </recommendedName>
    </domain>
</protein>
<comment type="function">
    <text evidence="1">Catalyzes the last two steps in the biosynthesis of 5-methylaminomethyl-2-thiouridine (mnm(5)s(2)U) at the wobble position (U34) in tRNA. Catalyzes the FAD-dependent demodification of cmnm(5)s(2)U34 to nm(5)s(2)U34, followed by the transfer of a methyl group from S-adenosyl-L-methionine to nm(5)s(2)U34, to form mnm(5)s(2)U34.</text>
</comment>
<comment type="catalytic activity">
    <reaction evidence="1">
        <text>5-aminomethyl-2-thiouridine(34) in tRNA + S-adenosyl-L-methionine = 5-methylaminomethyl-2-thiouridine(34) in tRNA + S-adenosyl-L-homocysteine + H(+)</text>
        <dbReference type="Rhea" id="RHEA:19569"/>
        <dbReference type="Rhea" id="RHEA-COMP:10195"/>
        <dbReference type="Rhea" id="RHEA-COMP:10197"/>
        <dbReference type="ChEBI" id="CHEBI:15378"/>
        <dbReference type="ChEBI" id="CHEBI:57856"/>
        <dbReference type="ChEBI" id="CHEBI:59789"/>
        <dbReference type="ChEBI" id="CHEBI:74454"/>
        <dbReference type="ChEBI" id="CHEBI:74455"/>
        <dbReference type="EC" id="2.1.1.61"/>
    </reaction>
</comment>
<comment type="cofactor">
    <cofactor evidence="1">
        <name>FAD</name>
        <dbReference type="ChEBI" id="CHEBI:57692"/>
    </cofactor>
</comment>
<comment type="subcellular location">
    <subcellularLocation>
        <location evidence="1">Cytoplasm</location>
    </subcellularLocation>
</comment>
<comment type="similarity">
    <text evidence="1">In the N-terminal section; belongs to the methyltransferase superfamily. tRNA (mnm(5)s(2)U34)-methyltransferase family.</text>
</comment>
<comment type="similarity">
    <text evidence="1">In the C-terminal section; belongs to the DAO family.</text>
</comment>
<reference key="1">
    <citation type="submission" date="2007-06" db="EMBL/GenBank/DDBJ databases">
        <title>Complete sequence of Marinomonas sp. MWYL1.</title>
        <authorList>
            <consortium name="US DOE Joint Genome Institute"/>
            <person name="Copeland A."/>
            <person name="Lucas S."/>
            <person name="Lapidus A."/>
            <person name="Barry K."/>
            <person name="Glavina del Rio T."/>
            <person name="Dalin E."/>
            <person name="Tice H."/>
            <person name="Pitluck S."/>
            <person name="Kiss H."/>
            <person name="Brettin T."/>
            <person name="Bruce D."/>
            <person name="Detter J.C."/>
            <person name="Han C."/>
            <person name="Schmutz J."/>
            <person name="Larimer F."/>
            <person name="Land M."/>
            <person name="Hauser L."/>
            <person name="Kyrpides N."/>
            <person name="Kim E."/>
            <person name="Johnston A.W.B."/>
            <person name="Todd J.D."/>
            <person name="Rogers R."/>
            <person name="Wexler M."/>
            <person name="Bond P.L."/>
            <person name="Li Y."/>
            <person name="Richardson P."/>
        </authorList>
    </citation>
    <scope>NUCLEOTIDE SEQUENCE [LARGE SCALE GENOMIC DNA]</scope>
    <source>
        <strain>MWYL1</strain>
    </source>
</reference>